<protein>
    <recommendedName>
        <fullName>N-(5'-phosphoribosyl)anthranilate isomerase</fullName>
        <shortName>PRAI</shortName>
        <ecNumber>5.3.1.24</ecNumber>
    </recommendedName>
</protein>
<evidence type="ECO:0000305" key="1"/>
<gene>
    <name type="primary">trpF</name>
    <name type="ordered locus">SSO0892</name>
</gene>
<comment type="catalytic activity">
    <reaction>
        <text>N-(5-phospho-beta-D-ribosyl)anthranilate = 1-(2-carboxyphenylamino)-1-deoxy-D-ribulose 5-phosphate</text>
        <dbReference type="Rhea" id="RHEA:21540"/>
        <dbReference type="ChEBI" id="CHEBI:18277"/>
        <dbReference type="ChEBI" id="CHEBI:58613"/>
        <dbReference type="EC" id="5.3.1.24"/>
    </reaction>
</comment>
<comment type="pathway">
    <text>Amino-acid biosynthesis; L-tryptophan biosynthesis; L-tryptophan from chorismate: step 3/5.</text>
</comment>
<comment type="similarity">
    <text evidence="1">Belongs to the TrpF family.</text>
</comment>
<dbReference type="EC" id="5.3.1.24"/>
<dbReference type="EMBL" id="Z50014">
    <property type="protein sequence ID" value="CAA90310.1"/>
    <property type="molecule type" value="Genomic_DNA"/>
</dbReference>
<dbReference type="EMBL" id="AE006641">
    <property type="protein sequence ID" value="AAK41174.1"/>
    <property type="molecule type" value="Genomic_DNA"/>
</dbReference>
<dbReference type="PIR" id="G90239">
    <property type="entry name" value="G90239"/>
</dbReference>
<dbReference type="RefSeq" id="WP_009992306.1">
    <property type="nucleotide sequence ID" value="NC_002754.1"/>
</dbReference>
<dbReference type="SMR" id="P50386"/>
<dbReference type="FunCoup" id="P50386">
    <property type="interactions" value="89"/>
</dbReference>
<dbReference type="STRING" id="273057.SSO0892"/>
<dbReference type="PaxDb" id="273057-SSO0892"/>
<dbReference type="EnsemblBacteria" id="AAK41174">
    <property type="protein sequence ID" value="AAK41174"/>
    <property type="gene ID" value="SSO0892"/>
</dbReference>
<dbReference type="KEGG" id="sso:SSO0892"/>
<dbReference type="PATRIC" id="fig|273057.12.peg.895"/>
<dbReference type="eggNOG" id="arCOG01983">
    <property type="taxonomic scope" value="Archaea"/>
</dbReference>
<dbReference type="HOGENOM" id="CLU_076364_3_0_2"/>
<dbReference type="InParanoid" id="P50386"/>
<dbReference type="PhylomeDB" id="P50386"/>
<dbReference type="UniPathway" id="UPA00035">
    <property type="reaction ID" value="UER00042"/>
</dbReference>
<dbReference type="Proteomes" id="UP000001974">
    <property type="component" value="Chromosome"/>
</dbReference>
<dbReference type="GO" id="GO:0004640">
    <property type="term" value="F:phosphoribosylanthranilate isomerase activity"/>
    <property type="evidence" value="ECO:0000318"/>
    <property type="project" value="GO_Central"/>
</dbReference>
<dbReference type="GO" id="GO:0000162">
    <property type="term" value="P:L-tryptophan biosynthetic process"/>
    <property type="evidence" value="ECO:0000318"/>
    <property type="project" value="GO_Central"/>
</dbReference>
<dbReference type="CDD" id="cd00405">
    <property type="entry name" value="PRAI"/>
    <property type="match status" value="1"/>
</dbReference>
<dbReference type="Gene3D" id="3.20.20.70">
    <property type="entry name" value="Aldolase class I"/>
    <property type="match status" value="1"/>
</dbReference>
<dbReference type="HAMAP" id="MF_00135">
    <property type="entry name" value="PRAI"/>
    <property type="match status" value="1"/>
</dbReference>
<dbReference type="InterPro" id="IPR013785">
    <property type="entry name" value="Aldolase_TIM"/>
</dbReference>
<dbReference type="InterPro" id="IPR001240">
    <property type="entry name" value="PRAI_dom"/>
</dbReference>
<dbReference type="InterPro" id="IPR011060">
    <property type="entry name" value="RibuloseP-bd_barrel"/>
</dbReference>
<dbReference type="InterPro" id="IPR044643">
    <property type="entry name" value="TrpF_fam"/>
</dbReference>
<dbReference type="PANTHER" id="PTHR42894">
    <property type="entry name" value="N-(5'-PHOSPHORIBOSYL)ANTHRANILATE ISOMERASE"/>
    <property type="match status" value="1"/>
</dbReference>
<dbReference type="PANTHER" id="PTHR42894:SF1">
    <property type="entry name" value="N-(5'-PHOSPHORIBOSYL)ANTHRANILATE ISOMERASE"/>
    <property type="match status" value="1"/>
</dbReference>
<dbReference type="Pfam" id="PF00697">
    <property type="entry name" value="PRAI"/>
    <property type="match status" value="1"/>
</dbReference>
<dbReference type="SUPFAM" id="SSF51366">
    <property type="entry name" value="Ribulose-phoshate binding barrel"/>
    <property type="match status" value="1"/>
</dbReference>
<name>TRPF_SACS2</name>
<accession>P50386</accession>
<sequence length="204" mass="23342">MVKLKICGNATLSDIIEFSKLDVDYLGIITDVVSQRFVKSEFLTFVKRYVEKPIVNVKVNVQISEIERELLVSDYFQIHRVLDDSELELLKSYDFRKRIILYVPASFEYKKYLERAIDTVDMVLVDSVKKGVGVDYNVVSSFLKDYPYLGVGGKISIDNISNFIDLNPAWLDISSSIEIYPGKKDINMVKKIVEVVKYGSSSNK</sequence>
<reference key="1">
    <citation type="submission" date="1995-07" db="EMBL/GenBank/DDBJ databases">
        <title>The tryptophan operon in Sulfolobus solfataricus.</title>
        <authorList>
            <person name="Tutino M.L."/>
            <person name="Cubellis M."/>
            <person name="Sannia G."/>
            <person name="Marino G."/>
        </authorList>
    </citation>
    <scope>NUCLEOTIDE SEQUENCE [GENOMIC DNA]</scope>
    <source>
        <strain>DSM 5833 / MT-4</strain>
    </source>
</reference>
<reference key="2">
    <citation type="journal article" date="2001" name="Proc. Natl. Acad. Sci. U.S.A.">
        <title>The complete genome of the crenarchaeon Sulfolobus solfataricus P2.</title>
        <authorList>
            <person name="She Q."/>
            <person name="Singh R.K."/>
            <person name="Confalonieri F."/>
            <person name="Zivanovic Y."/>
            <person name="Allard G."/>
            <person name="Awayez M.J."/>
            <person name="Chan-Weiher C.C.-Y."/>
            <person name="Clausen I.G."/>
            <person name="Curtis B.A."/>
            <person name="De Moors A."/>
            <person name="Erauso G."/>
            <person name="Fletcher C."/>
            <person name="Gordon P.M.K."/>
            <person name="Heikamp-de Jong I."/>
            <person name="Jeffries A.C."/>
            <person name="Kozera C.J."/>
            <person name="Medina N."/>
            <person name="Peng X."/>
            <person name="Thi-Ngoc H.P."/>
            <person name="Redder P."/>
            <person name="Schenk M.E."/>
            <person name="Theriault C."/>
            <person name="Tolstrup N."/>
            <person name="Charlebois R.L."/>
            <person name="Doolittle W.F."/>
            <person name="Duguet M."/>
            <person name="Gaasterland T."/>
            <person name="Garrett R.A."/>
            <person name="Ragan M.A."/>
            <person name="Sensen C.W."/>
            <person name="Van der Oost J."/>
        </authorList>
    </citation>
    <scope>NUCLEOTIDE SEQUENCE [LARGE SCALE GENOMIC DNA]</scope>
    <source>
        <strain>ATCC 35092 / DSM 1617 / JCM 11322 / P2</strain>
    </source>
</reference>
<feature type="chain" id="PRO_0000154415" description="N-(5'-phosphoribosyl)anthranilate isomerase">
    <location>
        <begin position="1"/>
        <end position="204"/>
    </location>
</feature>
<organism>
    <name type="scientific">Saccharolobus solfataricus (strain ATCC 35092 / DSM 1617 / JCM 11322 / P2)</name>
    <name type="common">Sulfolobus solfataricus</name>
    <dbReference type="NCBI Taxonomy" id="273057"/>
    <lineage>
        <taxon>Archaea</taxon>
        <taxon>Thermoproteota</taxon>
        <taxon>Thermoprotei</taxon>
        <taxon>Sulfolobales</taxon>
        <taxon>Sulfolobaceae</taxon>
        <taxon>Saccharolobus</taxon>
    </lineage>
</organism>
<keyword id="KW-0028">Amino-acid biosynthesis</keyword>
<keyword id="KW-0057">Aromatic amino acid biosynthesis</keyword>
<keyword id="KW-0413">Isomerase</keyword>
<keyword id="KW-1185">Reference proteome</keyword>
<keyword id="KW-0822">Tryptophan biosynthesis</keyword>
<proteinExistence type="inferred from homology"/>